<accession>A9MID0</accession>
<dbReference type="EC" id="1.3.3.3" evidence="1"/>
<dbReference type="EMBL" id="CP000880">
    <property type="protein sequence ID" value="ABX20367.1"/>
    <property type="molecule type" value="Genomic_DNA"/>
</dbReference>
<dbReference type="SMR" id="A9MID0"/>
<dbReference type="STRING" id="41514.SARI_00431"/>
<dbReference type="KEGG" id="ses:SARI_00431"/>
<dbReference type="HOGENOM" id="CLU_026169_0_1_6"/>
<dbReference type="UniPathway" id="UPA00251">
    <property type="reaction ID" value="UER00322"/>
</dbReference>
<dbReference type="Proteomes" id="UP000002084">
    <property type="component" value="Chromosome"/>
</dbReference>
<dbReference type="GO" id="GO:0005737">
    <property type="term" value="C:cytoplasm"/>
    <property type="evidence" value="ECO:0007669"/>
    <property type="project" value="UniProtKB-SubCell"/>
</dbReference>
<dbReference type="GO" id="GO:0004109">
    <property type="term" value="F:coproporphyrinogen oxidase activity"/>
    <property type="evidence" value="ECO:0007669"/>
    <property type="project" value="UniProtKB-UniRule"/>
</dbReference>
<dbReference type="GO" id="GO:0046872">
    <property type="term" value="F:metal ion binding"/>
    <property type="evidence" value="ECO:0007669"/>
    <property type="project" value="UniProtKB-KW"/>
</dbReference>
<dbReference type="GO" id="GO:0042803">
    <property type="term" value="F:protein homodimerization activity"/>
    <property type="evidence" value="ECO:0000250"/>
    <property type="project" value="UniProtKB"/>
</dbReference>
<dbReference type="GO" id="GO:0006782">
    <property type="term" value="P:protoporphyrinogen IX biosynthetic process"/>
    <property type="evidence" value="ECO:0007669"/>
    <property type="project" value="UniProtKB-UniRule"/>
</dbReference>
<dbReference type="FunFam" id="3.40.1500.10:FF:000001">
    <property type="entry name" value="Oxygen-dependent coproporphyrinogen-III oxidase"/>
    <property type="match status" value="1"/>
</dbReference>
<dbReference type="Gene3D" id="3.40.1500.10">
    <property type="entry name" value="Coproporphyrinogen III oxidase, aerobic"/>
    <property type="match status" value="1"/>
</dbReference>
<dbReference type="HAMAP" id="MF_00333">
    <property type="entry name" value="Coprogen_oxidas"/>
    <property type="match status" value="1"/>
</dbReference>
<dbReference type="InterPro" id="IPR001260">
    <property type="entry name" value="Coprogen_oxidase_aer"/>
</dbReference>
<dbReference type="InterPro" id="IPR036406">
    <property type="entry name" value="Coprogen_oxidase_aer_sf"/>
</dbReference>
<dbReference type="InterPro" id="IPR018375">
    <property type="entry name" value="Coprogen_oxidase_CS"/>
</dbReference>
<dbReference type="NCBIfam" id="NF003727">
    <property type="entry name" value="PRK05330.1"/>
    <property type="match status" value="1"/>
</dbReference>
<dbReference type="PANTHER" id="PTHR10755">
    <property type="entry name" value="COPROPORPHYRINOGEN III OXIDASE, MITOCHONDRIAL"/>
    <property type="match status" value="1"/>
</dbReference>
<dbReference type="PANTHER" id="PTHR10755:SF0">
    <property type="entry name" value="OXYGEN-DEPENDENT COPROPORPHYRINOGEN-III OXIDASE, MITOCHONDRIAL"/>
    <property type="match status" value="1"/>
</dbReference>
<dbReference type="Pfam" id="PF01218">
    <property type="entry name" value="Coprogen_oxidas"/>
    <property type="match status" value="1"/>
</dbReference>
<dbReference type="PIRSF" id="PIRSF000166">
    <property type="entry name" value="Coproporphyri_ox"/>
    <property type="match status" value="1"/>
</dbReference>
<dbReference type="PRINTS" id="PR00073">
    <property type="entry name" value="COPRGNOXDASE"/>
</dbReference>
<dbReference type="SUPFAM" id="SSF102886">
    <property type="entry name" value="Coproporphyrinogen III oxidase"/>
    <property type="match status" value="1"/>
</dbReference>
<dbReference type="PROSITE" id="PS01021">
    <property type="entry name" value="COPROGEN_OXIDASE"/>
    <property type="match status" value="1"/>
</dbReference>
<organism>
    <name type="scientific">Salmonella arizonae (strain ATCC BAA-731 / CDC346-86 / RSK2980)</name>
    <dbReference type="NCBI Taxonomy" id="41514"/>
    <lineage>
        <taxon>Bacteria</taxon>
        <taxon>Pseudomonadati</taxon>
        <taxon>Pseudomonadota</taxon>
        <taxon>Gammaproteobacteria</taxon>
        <taxon>Enterobacterales</taxon>
        <taxon>Enterobacteriaceae</taxon>
        <taxon>Salmonella</taxon>
    </lineage>
</organism>
<keyword id="KW-0963">Cytoplasm</keyword>
<keyword id="KW-0350">Heme biosynthesis</keyword>
<keyword id="KW-0479">Metal-binding</keyword>
<keyword id="KW-0560">Oxidoreductase</keyword>
<keyword id="KW-0627">Porphyrin biosynthesis</keyword>
<keyword id="KW-1185">Reference proteome</keyword>
<reference key="1">
    <citation type="submission" date="2007-11" db="EMBL/GenBank/DDBJ databases">
        <authorList>
            <consortium name="The Salmonella enterica serovar Arizonae Genome Sequencing Project"/>
            <person name="McClelland M."/>
            <person name="Sanderson E.K."/>
            <person name="Porwollik S."/>
            <person name="Spieth J."/>
            <person name="Clifton W.S."/>
            <person name="Fulton R."/>
            <person name="Chunyan W."/>
            <person name="Wollam A."/>
            <person name="Shah N."/>
            <person name="Pepin K."/>
            <person name="Bhonagiri V."/>
            <person name="Nash W."/>
            <person name="Johnson M."/>
            <person name="Thiruvilangam P."/>
            <person name="Wilson R."/>
        </authorList>
    </citation>
    <scope>NUCLEOTIDE SEQUENCE [LARGE SCALE GENOMIC DNA]</scope>
    <source>
        <strain>ATCC BAA-731 / CDC346-86 / RSK2980</strain>
    </source>
</reference>
<name>HEM6_SALAR</name>
<comment type="function">
    <text evidence="1">Involved in the heme biosynthesis. Catalyzes the aerobic oxidative decarboxylation of propionate groups of rings A and B of coproporphyrinogen-III to yield the vinyl groups in protoporphyrinogen-IX.</text>
</comment>
<comment type="catalytic activity">
    <reaction evidence="1">
        <text>coproporphyrinogen III + O2 + 2 H(+) = protoporphyrinogen IX + 2 CO2 + 2 H2O</text>
        <dbReference type="Rhea" id="RHEA:18257"/>
        <dbReference type="ChEBI" id="CHEBI:15377"/>
        <dbReference type="ChEBI" id="CHEBI:15378"/>
        <dbReference type="ChEBI" id="CHEBI:15379"/>
        <dbReference type="ChEBI" id="CHEBI:16526"/>
        <dbReference type="ChEBI" id="CHEBI:57307"/>
        <dbReference type="ChEBI" id="CHEBI:57309"/>
        <dbReference type="EC" id="1.3.3.3"/>
    </reaction>
</comment>
<comment type="cofactor">
    <cofactor evidence="1">
        <name>a divalent metal cation</name>
        <dbReference type="ChEBI" id="CHEBI:60240"/>
    </cofactor>
</comment>
<comment type="pathway">
    <text evidence="1">Porphyrin-containing compound metabolism; protoporphyrin-IX biosynthesis; protoporphyrinogen-IX from coproporphyrinogen-III (O2 route): step 1/1.</text>
</comment>
<comment type="subunit">
    <text evidence="1">Homodimer.</text>
</comment>
<comment type="subcellular location">
    <subcellularLocation>
        <location evidence="1">Cytoplasm</location>
    </subcellularLocation>
</comment>
<comment type="similarity">
    <text evidence="1">Belongs to the aerobic coproporphyrinogen-III oxidase family.</text>
</comment>
<gene>
    <name evidence="1" type="primary">hemF</name>
    <name type="ordered locus">SARI_00431</name>
</gene>
<protein>
    <recommendedName>
        <fullName evidence="1">Oxygen-dependent coproporphyrinogen-III oxidase</fullName>
        <shortName evidence="1">CPO</shortName>
        <shortName evidence="1">Coprogen oxidase</shortName>
        <shortName evidence="1">Coproporphyrinogenase</shortName>
        <ecNumber evidence="1">1.3.3.3</ecNumber>
    </recommendedName>
</protein>
<proteinExistence type="inferred from homology"/>
<evidence type="ECO:0000255" key="1">
    <source>
        <dbReference type="HAMAP-Rule" id="MF_00333"/>
    </source>
</evidence>
<sequence length="299" mass="34331">MKPDAQHVKQFLLRLQDDICQTLSAVDGANFIEDSWRREAGGGGRSRVLRNGGIFEQAGVNFSHVNGDAMPASATAHRPELVGRSFEAMGVSLVVHPRNPYIPTSHANVRFFIAEKPGADPVWWFGGGFDLTPYYGFEEDAVHWHRTARDLCQPFGEDVYPRYKKWCDDYFFIKHRNEQRGIGGLFFDDLNTPDFASCFAFMQAVGKGYTEAYLPIVERRKTMAWGERERSFQLYRRGRYVEFNLVWDRGTLFGLQTGGRTESILMSMPPLVRWEYDYQPKEGSPEAALSEFIQVRDWV</sequence>
<feature type="chain" id="PRO_1000079260" description="Oxygen-dependent coproporphyrinogen-III oxidase">
    <location>
        <begin position="1"/>
        <end position="299"/>
    </location>
</feature>
<feature type="region of interest" description="Important for dimerization" evidence="1">
    <location>
        <begin position="240"/>
        <end position="275"/>
    </location>
</feature>
<feature type="active site" description="Proton donor" evidence="1">
    <location>
        <position position="106"/>
    </location>
</feature>
<feature type="binding site" evidence="1">
    <location>
        <position position="92"/>
    </location>
    <ligand>
        <name>substrate</name>
    </ligand>
</feature>
<feature type="binding site" evidence="1">
    <location>
        <position position="96"/>
    </location>
    <ligand>
        <name>a divalent metal cation</name>
        <dbReference type="ChEBI" id="CHEBI:60240"/>
    </ligand>
</feature>
<feature type="binding site" evidence="1">
    <location>
        <position position="106"/>
    </location>
    <ligand>
        <name>a divalent metal cation</name>
        <dbReference type="ChEBI" id="CHEBI:60240"/>
    </ligand>
</feature>
<feature type="binding site" evidence="1">
    <location>
        <begin position="108"/>
        <end position="110"/>
    </location>
    <ligand>
        <name>substrate</name>
    </ligand>
</feature>
<feature type="binding site" evidence="1">
    <location>
        <position position="145"/>
    </location>
    <ligand>
        <name>a divalent metal cation</name>
        <dbReference type="ChEBI" id="CHEBI:60240"/>
    </ligand>
</feature>
<feature type="binding site" evidence="1">
    <location>
        <position position="175"/>
    </location>
    <ligand>
        <name>a divalent metal cation</name>
        <dbReference type="ChEBI" id="CHEBI:60240"/>
    </ligand>
</feature>
<feature type="binding site" evidence="1">
    <location>
        <begin position="258"/>
        <end position="260"/>
    </location>
    <ligand>
        <name>substrate</name>
    </ligand>
</feature>
<feature type="site" description="Important for dimerization" evidence="1">
    <location>
        <position position="175"/>
    </location>
</feature>